<keyword id="KW-0255">Endonuclease</keyword>
<keyword id="KW-0378">Hydrolase</keyword>
<keyword id="KW-0540">Nuclease</keyword>
<keyword id="KW-0694">RNA-binding</keyword>
<keyword id="KW-0819">tRNA processing</keyword>
<feature type="chain" id="PRO_1000194604" description="Ribonuclease P protein component">
    <location>
        <begin position="1"/>
        <end position="119"/>
    </location>
</feature>
<name>RNPA_BACC0</name>
<gene>
    <name evidence="1" type="primary">rnpA</name>
    <name type="ordered locus">BCAH820_5597</name>
</gene>
<accession>B7JIL4</accession>
<dbReference type="EC" id="3.1.26.5" evidence="1"/>
<dbReference type="EMBL" id="CP001283">
    <property type="protein sequence ID" value="ACK88089.1"/>
    <property type="molecule type" value="Genomic_DNA"/>
</dbReference>
<dbReference type="RefSeq" id="WP_000726628.1">
    <property type="nucleotide sequence ID" value="NC_011773.1"/>
</dbReference>
<dbReference type="SMR" id="B7JIL4"/>
<dbReference type="GeneID" id="45025315"/>
<dbReference type="KEGG" id="bcu:BCAH820_5597"/>
<dbReference type="HOGENOM" id="CLU_117179_9_1_9"/>
<dbReference type="Proteomes" id="UP000001363">
    <property type="component" value="Chromosome"/>
</dbReference>
<dbReference type="GO" id="GO:0030677">
    <property type="term" value="C:ribonuclease P complex"/>
    <property type="evidence" value="ECO:0007669"/>
    <property type="project" value="TreeGrafter"/>
</dbReference>
<dbReference type="GO" id="GO:0042781">
    <property type="term" value="F:3'-tRNA processing endoribonuclease activity"/>
    <property type="evidence" value="ECO:0007669"/>
    <property type="project" value="TreeGrafter"/>
</dbReference>
<dbReference type="GO" id="GO:0004526">
    <property type="term" value="F:ribonuclease P activity"/>
    <property type="evidence" value="ECO:0007669"/>
    <property type="project" value="UniProtKB-UniRule"/>
</dbReference>
<dbReference type="GO" id="GO:0000049">
    <property type="term" value="F:tRNA binding"/>
    <property type="evidence" value="ECO:0007669"/>
    <property type="project" value="UniProtKB-UniRule"/>
</dbReference>
<dbReference type="GO" id="GO:0001682">
    <property type="term" value="P:tRNA 5'-leader removal"/>
    <property type="evidence" value="ECO:0007669"/>
    <property type="project" value="UniProtKB-UniRule"/>
</dbReference>
<dbReference type="FunFam" id="3.30.230.10:FF:000021">
    <property type="entry name" value="Ribonuclease P protein component"/>
    <property type="match status" value="1"/>
</dbReference>
<dbReference type="Gene3D" id="3.30.230.10">
    <property type="match status" value="1"/>
</dbReference>
<dbReference type="HAMAP" id="MF_00227">
    <property type="entry name" value="RNase_P"/>
    <property type="match status" value="1"/>
</dbReference>
<dbReference type="InterPro" id="IPR020568">
    <property type="entry name" value="Ribosomal_Su5_D2-typ_SF"/>
</dbReference>
<dbReference type="InterPro" id="IPR014721">
    <property type="entry name" value="Ribsml_uS5_D2-typ_fold_subgr"/>
</dbReference>
<dbReference type="InterPro" id="IPR000100">
    <property type="entry name" value="RNase_P"/>
</dbReference>
<dbReference type="InterPro" id="IPR020539">
    <property type="entry name" value="RNase_P_CS"/>
</dbReference>
<dbReference type="NCBIfam" id="TIGR00188">
    <property type="entry name" value="rnpA"/>
    <property type="match status" value="1"/>
</dbReference>
<dbReference type="PANTHER" id="PTHR33992">
    <property type="entry name" value="RIBONUCLEASE P PROTEIN COMPONENT"/>
    <property type="match status" value="1"/>
</dbReference>
<dbReference type="PANTHER" id="PTHR33992:SF1">
    <property type="entry name" value="RIBONUCLEASE P PROTEIN COMPONENT"/>
    <property type="match status" value="1"/>
</dbReference>
<dbReference type="Pfam" id="PF00825">
    <property type="entry name" value="Ribonuclease_P"/>
    <property type="match status" value="1"/>
</dbReference>
<dbReference type="SUPFAM" id="SSF54211">
    <property type="entry name" value="Ribosomal protein S5 domain 2-like"/>
    <property type="match status" value="1"/>
</dbReference>
<dbReference type="PROSITE" id="PS00648">
    <property type="entry name" value="RIBONUCLEASE_P"/>
    <property type="match status" value="1"/>
</dbReference>
<protein>
    <recommendedName>
        <fullName evidence="1">Ribonuclease P protein component</fullName>
        <shortName evidence="1">RNase P protein</shortName>
        <shortName evidence="1">RNaseP protein</shortName>
        <ecNumber evidence="1">3.1.26.5</ecNumber>
    </recommendedName>
    <alternativeName>
        <fullName evidence="1">Protein C5</fullName>
    </alternativeName>
</protein>
<reference key="1">
    <citation type="submission" date="2008-10" db="EMBL/GenBank/DDBJ databases">
        <title>Genome sequence of Bacillus cereus AH820.</title>
        <authorList>
            <person name="Dodson R.J."/>
            <person name="Durkin A.S."/>
            <person name="Rosovitz M.J."/>
            <person name="Rasko D.A."/>
            <person name="Hoffmaster A."/>
            <person name="Ravel J."/>
            <person name="Sutton G."/>
        </authorList>
    </citation>
    <scope>NUCLEOTIDE SEQUENCE [LARGE SCALE GENOMIC DNA]</scope>
    <source>
        <strain>AH820</strain>
    </source>
</reference>
<evidence type="ECO:0000255" key="1">
    <source>
        <dbReference type="HAMAP-Rule" id="MF_00227"/>
    </source>
</evidence>
<proteinExistence type="inferred from homology"/>
<organism>
    <name type="scientific">Bacillus cereus (strain AH820)</name>
    <dbReference type="NCBI Taxonomy" id="405535"/>
    <lineage>
        <taxon>Bacteria</taxon>
        <taxon>Bacillati</taxon>
        <taxon>Bacillota</taxon>
        <taxon>Bacilli</taxon>
        <taxon>Bacillales</taxon>
        <taxon>Bacillaceae</taxon>
        <taxon>Bacillus</taxon>
        <taxon>Bacillus cereus group</taxon>
    </lineage>
</organism>
<sequence length="119" mass="14027">MKKKHRIKKNDEFQTVFQKGKSNANRQFVVYQLDKEEQPNFRIGLSVSKKIGNAVVRNRIKRMIRQSITELKDEIDSGKDFVIIARKPCAEMTYEELKKSLIHVFKRSGMKRIKSSVRK</sequence>
<comment type="function">
    <text evidence="1">RNaseP catalyzes the removal of the 5'-leader sequence from pre-tRNA to produce the mature 5'-terminus. It can also cleave other RNA substrates such as 4.5S RNA. The protein component plays an auxiliary but essential role in vivo by binding to the 5'-leader sequence and broadening the substrate specificity of the ribozyme.</text>
</comment>
<comment type="catalytic activity">
    <reaction evidence="1">
        <text>Endonucleolytic cleavage of RNA, removing 5'-extranucleotides from tRNA precursor.</text>
        <dbReference type="EC" id="3.1.26.5"/>
    </reaction>
</comment>
<comment type="subunit">
    <text evidence="1">Consists of a catalytic RNA component (M1 or rnpB) and a protein subunit.</text>
</comment>
<comment type="similarity">
    <text evidence="1">Belongs to the RnpA family.</text>
</comment>